<feature type="chain" id="PRO_1000085918" description="Small ribosomal subunit protein uS8">
    <location>
        <begin position="1"/>
        <end position="130"/>
    </location>
</feature>
<proteinExistence type="inferred from homology"/>
<accession>A9KD17</accession>
<dbReference type="EMBL" id="CP000733">
    <property type="protein sequence ID" value="ABS77604.2"/>
    <property type="status" value="ALT_INIT"/>
    <property type="molecule type" value="Genomic_DNA"/>
</dbReference>
<dbReference type="SMR" id="A9KD17"/>
<dbReference type="KEGG" id="cbd:CBUD_1840"/>
<dbReference type="HOGENOM" id="CLU_098428_0_0_6"/>
<dbReference type="Proteomes" id="UP000008555">
    <property type="component" value="Chromosome"/>
</dbReference>
<dbReference type="GO" id="GO:1990904">
    <property type="term" value="C:ribonucleoprotein complex"/>
    <property type="evidence" value="ECO:0007669"/>
    <property type="project" value="UniProtKB-KW"/>
</dbReference>
<dbReference type="GO" id="GO:0005840">
    <property type="term" value="C:ribosome"/>
    <property type="evidence" value="ECO:0007669"/>
    <property type="project" value="UniProtKB-KW"/>
</dbReference>
<dbReference type="GO" id="GO:0019843">
    <property type="term" value="F:rRNA binding"/>
    <property type="evidence" value="ECO:0007669"/>
    <property type="project" value="UniProtKB-UniRule"/>
</dbReference>
<dbReference type="GO" id="GO:0003735">
    <property type="term" value="F:structural constituent of ribosome"/>
    <property type="evidence" value="ECO:0007669"/>
    <property type="project" value="InterPro"/>
</dbReference>
<dbReference type="GO" id="GO:0006412">
    <property type="term" value="P:translation"/>
    <property type="evidence" value="ECO:0007669"/>
    <property type="project" value="UniProtKB-UniRule"/>
</dbReference>
<dbReference type="FunFam" id="3.30.1370.30:FF:000002">
    <property type="entry name" value="30S ribosomal protein S8"/>
    <property type="match status" value="1"/>
</dbReference>
<dbReference type="FunFam" id="3.30.1490.10:FF:000001">
    <property type="entry name" value="30S ribosomal protein S8"/>
    <property type="match status" value="1"/>
</dbReference>
<dbReference type="Gene3D" id="3.30.1370.30">
    <property type="match status" value="1"/>
</dbReference>
<dbReference type="Gene3D" id="3.30.1490.10">
    <property type="match status" value="1"/>
</dbReference>
<dbReference type="HAMAP" id="MF_01302_B">
    <property type="entry name" value="Ribosomal_uS8_B"/>
    <property type="match status" value="1"/>
</dbReference>
<dbReference type="InterPro" id="IPR000630">
    <property type="entry name" value="Ribosomal_uS8"/>
</dbReference>
<dbReference type="InterPro" id="IPR047863">
    <property type="entry name" value="Ribosomal_uS8_CS"/>
</dbReference>
<dbReference type="InterPro" id="IPR035987">
    <property type="entry name" value="Ribosomal_uS8_sf"/>
</dbReference>
<dbReference type="NCBIfam" id="NF001109">
    <property type="entry name" value="PRK00136.1"/>
    <property type="match status" value="1"/>
</dbReference>
<dbReference type="PANTHER" id="PTHR11758">
    <property type="entry name" value="40S RIBOSOMAL PROTEIN S15A"/>
    <property type="match status" value="1"/>
</dbReference>
<dbReference type="Pfam" id="PF00410">
    <property type="entry name" value="Ribosomal_S8"/>
    <property type="match status" value="1"/>
</dbReference>
<dbReference type="SUPFAM" id="SSF56047">
    <property type="entry name" value="Ribosomal protein S8"/>
    <property type="match status" value="1"/>
</dbReference>
<dbReference type="PROSITE" id="PS00053">
    <property type="entry name" value="RIBOSOMAL_S8"/>
    <property type="match status" value="1"/>
</dbReference>
<keyword id="KW-0687">Ribonucleoprotein</keyword>
<keyword id="KW-0689">Ribosomal protein</keyword>
<keyword id="KW-0694">RNA-binding</keyword>
<keyword id="KW-0699">rRNA-binding</keyword>
<name>RS8_COXBN</name>
<sequence>MMQDPISDMLTRIRNAQAVRKKEVVMPRSKLKMSIANVLKEEGYIVDYREEGDSTKPQLVITLKYHEGESVISEIRRVSSPALQVYKSKDELPKVKNGLGIAIISTSKGVMSDRQARRLGEGGEVLCYVS</sequence>
<protein>
    <recommendedName>
        <fullName evidence="1">Small ribosomal subunit protein uS8</fullName>
    </recommendedName>
    <alternativeName>
        <fullName evidence="2">30S ribosomal protein S8</fullName>
    </alternativeName>
</protein>
<evidence type="ECO:0000255" key="1">
    <source>
        <dbReference type="HAMAP-Rule" id="MF_01302"/>
    </source>
</evidence>
<evidence type="ECO:0000305" key="2"/>
<comment type="function">
    <text evidence="1">One of the primary rRNA binding proteins, it binds directly to 16S rRNA central domain where it helps coordinate assembly of the platform of the 30S subunit.</text>
</comment>
<comment type="subunit">
    <text evidence="1">Part of the 30S ribosomal subunit. Contacts proteins S5 and S12.</text>
</comment>
<comment type="similarity">
    <text evidence="1">Belongs to the universal ribosomal protein uS8 family.</text>
</comment>
<comment type="sequence caution" evidence="2">
    <conflict type="erroneous initiation">
        <sequence resource="EMBL-CDS" id="ABS77604"/>
    </conflict>
</comment>
<gene>
    <name evidence="1" type="primary">rpsH</name>
    <name type="ordered locus">CBUD_1840</name>
</gene>
<reference key="1">
    <citation type="journal article" date="2009" name="Infect. Immun.">
        <title>Comparative genomics reveal extensive transposon-mediated genomic plasticity and diversity among potential effector proteins within the genus Coxiella.</title>
        <authorList>
            <person name="Beare P.A."/>
            <person name="Unsworth N."/>
            <person name="Andoh M."/>
            <person name="Voth D.E."/>
            <person name="Omsland A."/>
            <person name="Gilk S.D."/>
            <person name="Williams K.P."/>
            <person name="Sobral B.W."/>
            <person name="Kupko J.J. III"/>
            <person name="Porcella S.F."/>
            <person name="Samuel J.E."/>
            <person name="Heinzen R.A."/>
        </authorList>
    </citation>
    <scope>NUCLEOTIDE SEQUENCE [LARGE SCALE GENOMIC DNA]</scope>
    <source>
        <strain>Dugway 5J108-111</strain>
    </source>
</reference>
<organism>
    <name type="scientific">Coxiella burnetii (strain Dugway 5J108-111)</name>
    <dbReference type="NCBI Taxonomy" id="434922"/>
    <lineage>
        <taxon>Bacteria</taxon>
        <taxon>Pseudomonadati</taxon>
        <taxon>Pseudomonadota</taxon>
        <taxon>Gammaproteobacteria</taxon>
        <taxon>Legionellales</taxon>
        <taxon>Coxiellaceae</taxon>
        <taxon>Coxiella</taxon>
    </lineage>
</organism>